<proteinExistence type="inferred from homology"/>
<name>RNPA_CHLAB</name>
<organism>
    <name type="scientific">Chlamydia abortus (strain DSM 27085 / S26/3)</name>
    <name type="common">Chlamydophila abortus</name>
    <dbReference type="NCBI Taxonomy" id="218497"/>
    <lineage>
        <taxon>Bacteria</taxon>
        <taxon>Pseudomonadati</taxon>
        <taxon>Chlamydiota</taxon>
        <taxon>Chlamydiia</taxon>
        <taxon>Chlamydiales</taxon>
        <taxon>Chlamydiaceae</taxon>
        <taxon>Chlamydia/Chlamydophila group</taxon>
        <taxon>Chlamydia</taxon>
    </lineage>
</organism>
<comment type="function">
    <text evidence="1">RNaseP catalyzes the removal of the 5'-leader sequence from pre-tRNA to produce the mature 5'-terminus. It can also cleave other RNA substrates such as 4.5S RNA. The protein component plays an auxiliary but essential role in vivo by binding to the 5'-leader sequence and broadening the substrate specificity of the ribozyme.</text>
</comment>
<comment type="catalytic activity">
    <reaction evidence="1">
        <text>Endonucleolytic cleavage of RNA, removing 5'-extranucleotides from tRNA precursor.</text>
        <dbReference type="EC" id="3.1.26.5"/>
    </reaction>
</comment>
<comment type="subunit">
    <text evidence="1">Consists of a catalytic RNA component (M1 or rnpB) and a protein subunit.</text>
</comment>
<comment type="similarity">
    <text evidence="1">Belongs to the RnpA family.</text>
</comment>
<feature type="chain" id="PRO_1000021390" description="Ribonuclease P protein component">
    <location>
        <begin position="1"/>
        <end position="139"/>
    </location>
</feature>
<feature type="region of interest" description="Disordered" evidence="2">
    <location>
        <begin position="116"/>
        <end position="139"/>
    </location>
</feature>
<protein>
    <recommendedName>
        <fullName evidence="1">Ribonuclease P protein component</fullName>
        <shortName evidence="1">RNase P protein</shortName>
        <shortName evidence="1">RNaseP protein</shortName>
        <ecNumber evidence="1">3.1.26.5</ecNumber>
    </recommendedName>
    <alternativeName>
        <fullName evidence="1">Protein C5</fullName>
    </alternativeName>
</protein>
<dbReference type="EC" id="3.1.26.5" evidence="1"/>
<dbReference type="EMBL" id="CR848038">
    <property type="protein sequence ID" value="CAH64246.1"/>
    <property type="molecule type" value="Genomic_DNA"/>
</dbReference>
<dbReference type="RefSeq" id="WP_011097341.1">
    <property type="nucleotide sequence ID" value="NC_004552.2"/>
</dbReference>
<dbReference type="SMR" id="Q5L548"/>
<dbReference type="KEGG" id="cab:CAB804"/>
<dbReference type="eggNOG" id="COG0594">
    <property type="taxonomic scope" value="Bacteria"/>
</dbReference>
<dbReference type="HOGENOM" id="CLU_117179_9_2_0"/>
<dbReference type="OrthoDB" id="9810867at2"/>
<dbReference type="Proteomes" id="UP000001012">
    <property type="component" value="Chromosome"/>
</dbReference>
<dbReference type="GO" id="GO:0030677">
    <property type="term" value="C:ribonuclease P complex"/>
    <property type="evidence" value="ECO:0007669"/>
    <property type="project" value="TreeGrafter"/>
</dbReference>
<dbReference type="GO" id="GO:0042781">
    <property type="term" value="F:3'-tRNA processing endoribonuclease activity"/>
    <property type="evidence" value="ECO:0007669"/>
    <property type="project" value="TreeGrafter"/>
</dbReference>
<dbReference type="GO" id="GO:0004526">
    <property type="term" value="F:ribonuclease P activity"/>
    <property type="evidence" value="ECO:0007669"/>
    <property type="project" value="UniProtKB-UniRule"/>
</dbReference>
<dbReference type="GO" id="GO:0000049">
    <property type="term" value="F:tRNA binding"/>
    <property type="evidence" value="ECO:0007669"/>
    <property type="project" value="UniProtKB-UniRule"/>
</dbReference>
<dbReference type="GO" id="GO:0001682">
    <property type="term" value="P:tRNA 5'-leader removal"/>
    <property type="evidence" value="ECO:0007669"/>
    <property type="project" value="UniProtKB-UniRule"/>
</dbReference>
<dbReference type="Gene3D" id="3.30.230.10">
    <property type="match status" value="1"/>
</dbReference>
<dbReference type="HAMAP" id="MF_00227">
    <property type="entry name" value="RNase_P"/>
    <property type="match status" value="1"/>
</dbReference>
<dbReference type="InterPro" id="IPR020568">
    <property type="entry name" value="Ribosomal_Su5_D2-typ_SF"/>
</dbReference>
<dbReference type="InterPro" id="IPR014721">
    <property type="entry name" value="Ribsml_uS5_D2-typ_fold_subgr"/>
</dbReference>
<dbReference type="InterPro" id="IPR000100">
    <property type="entry name" value="RNase_P"/>
</dbReference>
<dbReference type="InterPro" id="IPR020539">
    <property type="entry name" value="RNase_P_CS"/>
</dbReference>
<dbReference type="NCBIfam" id="TIGR00188">
    <property type="entry name" value="rnpA"/>
    <property type="match status" value="1"/>
</dbReference>
<dbReference type="PANTHER" id="PTHR33992">
    <property type="entry name" value="RIBONUCLEASE P PROTEIN COMPONENT"/>
    <property type="match status" value="1"/>
</dbReference>
<dbReference type="PANTHER" id="PTHR33992:SF1">
    <property type="entry name" value="RIBONUCLEASE P PROTEIN COMPONENT"/>
    <property type="match status" value="1"/>
</dbReference>
<dbReference type="Pfam" id="PF00825">
    <property type="entry name" value="Ribonuclease_P"/>
    <property type="match status" value="1"/>
</dbReference>
<dbReference type="SUPFAM" id="SSF54211">
    <property type="entry name" value="Ribosomal protein S5 domain 2-like"/>
    <property type="match status" value="1"/>
</dbReference>
<dbReference type="PROSITE" id="PS00648">
    <property type="entry name" value="RIBONUCLEASE_P"/>
    <property type="match status" value="1"/>
</dbReference>
<evidence type="ECO:0000255" key="1">
    <source>
        <dbReference type="HAMAP-Rule" id="MF_00227"/>
    </source>
</evidence>
<evidence type="ECO:0000256" key="2">
    <source>
        <dbReference type="SAM" id="MobiDB-lite"/>
    </source>
</evidence>
<sequence length="139" mass="16122">MYRSTLPKRARVLKRRQFLYISRAGSRCQGSQVIFHVAPSKYPGCCKLGITVSKKFGKANKRNYFKRIVREAFRLKRHSLPSCQIVVMPKNKHRPKFEELLQDFTQQIPEALNSKFSKNKSTIGGEYSPKNEQCESELP</sequence>
<accession>Q5L548</accession>
<keyword id="KW-0255">Endonuclease</keyword>
<keyword id="KW-0378">Hydrolase</keyword>
<keyword id="KW-0540">Nuclease</keyword>
<keyword id="KW-0694">RNA-binding</keyword>
<keyword id="KW-0819">tRNA processing</keyword>
<reference key="1">
    <citation type="journal article" date="2005" name="Genome Res.">
        <title>The Chlamydophila abortus genome sequence reveals an array of variable proteins that contribute to interspecies variation.</title>
        <authorList>
            <person name="Thomson N.R."/>
            <person name="Yeats C."/>
            <person name="Bell K."/>
            <person name="Holden M.T.G."/>
            <person name="Bentley S.D."/>
            <person name="Livingstone M."/>
            <person name="Cerdeno-Tarraga A.-M."/>
            <person name="Harris B."/>
            <person name="Doggett J."/>
            <person name="Ormond D."/>
            <person name="Mungall K."/>
            <person name="Clarke K."/>
            <person name="Feltwell T."/>
            <person name="Hance Z."/>
            <person name="Sanders M."/>
            <person name="Quail M.A."/>
            <person name="Price C."/>
            <person name="Barrell B.G."/>
            <person name="Parkhill J."/>
            <person name="Longbottom D."/>
        </authorList>
    </citation>
    <scope>NUCLEOTIDE SEQUENCE [LARGE SCALE GENOMIC DNA]</scope>
    <source>
        <strain>DSM 27085 / S26/3</strain>
    </source>
</reference>
<gene>
    <name evidence="1" type="primary">rnpA</name>
    <name type="ordered locus">CAB804</name>
</gene>